<name>NRAM_I86A3</name>
<protein>
    <recommendedName>
        <fullName evidence="1">Neuraminidase</fullName>
        <ecNumber evidence="1">3.2.1.18</ecNumber>
    </recommendedName>
</protein>
<evidence type="ECO:0000255" key="1">
    <source>
        <dbReference type="HAMAP-Rule" id="MF_04071"/>
    </source>
</evidence>
<organismHost>
    <name type="scientific">Aves</name>
    <dbReference type="NCBI Taxonomy" id="8782"/>
</organismHost>
<organismHost>
    <name type="scientific">Equus caballus</name>
    <name type="common">Horse</name>
    <dbReference type="NCBI Taxonomy" id="9796"/>
</organismHost>
<sequence length="470" mass="52125">MNPNQKIIAIGSASLGILILNVILHVVSIIVTVLVLNNNGTGLNCNGTIIREYNETVRVERITQWYNTNTIEYIERPSNEYYMNNTEPLCEAQGFAPFSKDNGIRIGSRGHVFVIREPFVSCSPSECRTFFLTQGSLLNDKHSNGTVKDRSPYRTLMSVKIGQSPNVYQARFESVAWSATACHDGKKWMTVGVTGPDNQAVAVVNYGGVPVDIINSWAGDILRTQESSCTCIKGDCYWVMTDGPANRQAKYRIFKAKDGRIIGQTDISFNGGHIEECSCYPNEGKVECICRDNWTGTNRPILVISSDLSYTVGYLCAGIPTDTPRGEDSQFTGSCTSPLGNKGYGVKGFGFRQGTDVWAGRTISRTSRSGFEIIKIRNGWTQNSKDQIRRQVIIDNLNWSGYSGSFTLPVELTKKGCLVPCFWVEMIRGKPEETTIWTSSSSIVMCGVDHKIASWSWHDGAILPFDIDKM</sequence>
<proteinExistence type="inferred from homology"/>
<organism>
    <name type="scientific">Influenza A virus (strain A/Equine/Tennessee/5/1986 H3N8)</name>
    <dbReference type="NCBI Taxonomy" id="380339"/>
    <lineage>
        <taxon>Viruses</taxon>
        <taxon>Riboviria</taxon>
        <taxon>Orthornavirae</taxon>
        <taxon>Negarnaviricota</taxon>
        <taxon>Polyploviricotina</taxon>
        <taxon>Insthoviricetes</taxon>
        <taxon>Articulavirales</taxon>
        <taxon>Orthomyxoviridae</taxon>
        <taxon>Alphainfluenzavirus</taxon>
        <taxon>Alphainfluenzavirus influenzae</taxon>
        <taxon>Influenza A virus</taxon>
    </lineage>
</organism>
<reference key="1">
    <citation type="journal article" date="1993" name="Virology">
        <title>Phylogenetic analysis of the N8 neuraminidase gene of influenza A viruses.</title>
        <authorList>
            <person name="Saito T."/>
            <person name="Kawaoka Y."/>
            <person name="Webster R.G."/>
        </authorList>
    </citation>
    <scope>NUCLEOTIDE SEQUENCE [GENOMIC RNA]</scope>
</reference>
<reference key="2">
    <citation type="journal article" date="2004" name="Virus Res.">
        <title>Assembly and budding of influenza virus.</title>
        <authorList>
            <person name="Nayak D.P."/>
            <person name="Hui E.K."/>
            <person name="Barman S."/>
        </authorList>
    </citation>
    <scope>REVIEW</scope>
</reference>
<reference key="3">
    <citation type="journal article" date="2005" name="N. Engl. J. Med.">
        <title>Neuraminidase inhibitors for influenza.</title>
        <authorList>
            <person name="Moscona A."/>
        </authorList>
    </citation>
    <scope>REVIEW</scope>
</reference>
<reference key="4">
    <citation type="journal article" date="2005" name="Biol. Pharm. Bull.">
        <title>Sialobiology of influenza: molecular mechanism of host range variation of influenza viruses.</title>
        <authorList>
            <person name="Suzuki Y."/>
        </authorList>
    </citation>
    <scope>REVIEW</scope>
</reference>
<feature type="chain" id="PRO_0000078702" description="Neuraminidase">
    <location>
        <begin position="1"/>
        <end position="470"/>
    </location>
</feature>
<feature type="topological domain" description="Intravirion" evidence="1">
    <location>
        <begin position="1"/>
        <end position="14"/>
    </location>
</feature>
<feature type="transmembrane region" description="Helical" evidence="1">
    <location>
        <begin position="15"/>
        <end position="35"/>
    </location>
</feature>
<feature type="topological domain" description="Virion surface" evidence="1">
    <location>
        <begin position="36"/>
        <end position="470"/>
    </location>
</feature>
<feature type="region of interest" description="Involved in apical transport and lipid raft association" evidence="1">
    <location>
        <begin position="11"/>
        <end position="32"/>
    </location>
</feature>
<feature type="region of interest" description="Hypervariable stalk region" evidence="1">
    <location>
        <begin position="32"/>
        <end position="86"/>
    </location>
</feature>
<feature type="region of interest" description="Head of neuraminidase" evidence="1">
    <location>
        <begin position="89"/>
        <end position="470"/>
    </location>
</feature>
<feature type="active site" description="Proton donor/acceptor" evidence="1">
    <location>
        <position position="149"/>
    </location>
</feature>
<feature type="active site" description="Nucleophile" evidence="1">
    <location>
        <position position="402"/>
    </location>
</feature>
<feature type="binding site" evidence="1">
    <location>
        <position position="116"/>
    </location>
    <ligand>
        <name>substrate</name>
    </ligand>
</feature>
<feature type="binding site" evidence="1">
    <location>
        <position position="150"/>
    </location>
    <ligand>
        <name>substrate</name>
    </ligand>
</feature>
<feature type="binding site" evidence="1">
    <location>
        <begin position="275"/>
        <end position="276"/>
    </location>
    <ligand>
        <name>substrate</name>
    </ligand>
</feature>
<feature type="binding site" evidence="1">
    <location>
        <position position="291"/>
    </location>
    <ligand>
        <name>substrate</name>
    </ligand>
</feature>
<feature type="binding site" evidence="1">
    <location>
        <position position="292"/>
    </location>
    <ligand>
        <name>Ca(2+)</name>
        <dbReference type="ChEBI" id="CHEBI:29108"/>
    </ligand>
</feature>
<feature type="binding site" evidence="1">
    <location>
        <position position="296"/>
    </location>
    <ligand>
        <name>Ca(2+)</name>
        <dbReference type="ChEBI" id="CHEBI:29108"/>
    </ligand>
</feature>
<feature type="binding site" evidence="1">
    <location>
        <position position="322"/>
    </location>
    <ligand>
        <name>Ca(2+)</name>
        <dbReference type="ChEBI" id="CHEBI:29108"/>
    </ligand>
</feature>
<feature type="binding site" evidence="1">
    <location>
        <position position="368"/>
    </location>
    <ligand>
        <name>substrate</name>
    </ligand>
</feature>
<feature type="glycosylation site" description="N-linked (GlcNAc...) asparagine; by host" evidence="1">
    <location>
        <position position="39"/>
    </location>
</feature>
<feature type="glycosylation site" description="N-linked (GlcNAc...) asparagine; by host" evidence="1">
    <location>
        <position position="46"/>
    </location>
</feature>
<feature type="glycosylation site" description="N-linked (GlcNAc...) asparagine; by host" evidence="1">
    <location>
        <position position="54"/>
    </location>
</feature>
<feature type="glycosylation site" description="N-linked (GlcNAc...) asparagine; by host" evidence="1">
    <location>
        <position position="84"/>
    </location>
</feature>
<feature type="glycosylation site" description="N-linked (GlcNAc...) asparagine; by host" evidence="1">
    <location>
        <position position="144"/>
    </location>
</feature>
<feature type="glycosylation site" description="N-linked (GlcNAc...) asparagine; by host" evidence="1">
    <location>
        <position position="293"/>
    </location>
</feature>
<feature type="glycosylation site" description="N-linked (GlcNAc...) asparagine; by host" evidence="1">
    <location>
        <position position="398"/>
    </location>
</feature>
<feature type="disulfide bond" evidence="1">
    <location>
        <begin position="90"/>
        <end position="417"/>
    </location>
</feature>
<feature type="disulfide bond" evidence="1">
    <location>
        <begin position="122"/>
        <end position="127"/>
    </location>
</feature>
<feature type="disulfide bond" evidence="1">
    <location>
        <begin position="182"/>
        <end position="229"/>
    </location>
</feature>
<feature type="disulfide bond" evidence="1">
    <location>
        <begin position="231"/>
        <end position="236"/>
    </location>
</feature>
<feature type="disulfide bond" evidence="1">
    <location>
        <begin position="277"/>
        <end position="290"/>
    </location>
</feature>
<feature type="disulfide bond" evidence="1">
    <location>
        <begin position="279"/>
        <end position="288"/>
    </location>
</feature>
<feature type="disulfide bond" evidence="1">
    <location>
        <begin position="316"/>
        <end position="335"/>
    </location>
</feature>
<feature type="disulfide bond" evidence="1">
    <location>
        <begin position="421"/>
        <end position="446"/>
    </location>
</feature>
<keyword id="KW-0106">Calcium</keyword>
<keyword id="KW-1015">Disulfide bond</keyword>
<keyword id="KW-0325">Glycoprotein</keyword>
<keyword id="KW-0326">Glycosidase</keyword>
<keyword id="KW-1032">Host cell membrane</keyword>
<keyword id="KW-1043">Host membrane</keyword>
<keyword id="KW-0378">Hydrolase</keyword>
<keyword id="KW-0472">Membrane</keyword>
<keyword id="KW-0479">Metal-binding</keyword>
<keyword id="KW-0735">Signal-anchor</keyword>
<keyword id="KW-0812">Transmembrane</keyword>
<keyword id="KW-1133">Transmembrane helix</keyword>
<keyword id="KW-0946">Virion</keyword>
<comment type="function">
    <text evidence="1">Catalyzes the removal of terminal sialic acid residues from viral and cellular glycoconjugates. Cleaves off the terminal sialic acids on the glycosylated HA during virus budding to facilitate virus release. Additionally helps virus spread through the circulation by further removing sialic acids from the cell surface. These cleavages prevent self-aggregation and ensure the efficient spread of the progeny virus from cell to cell. Otherwise, infection would be limited to one round of replication. Described as a receptor-destroying enzyme because it cleaves a terminal sialic acid from the cellular receptors. May facilitate viral invasion of the upper airways by cleaving the sialic acid moieties on the mucin of the airway epithelial cells. Likely to plays a role in the budding process through its association with lipid rafts during intracellular transport. May additionally display a raft-association independent effect on budding. Plays a role in the determination of host range restriction on replication and virulence. Sialidase activity in late endosome/lysosome traffic seems to enhance virus replication.</text>
</comment>
<comment type="catalytic activity">
    <reaction evidence="1">
        <text>Hydrolysis of alpha-(2-&gt;3)-, alpha-(2-&gt;6)-, alpha-(2-&gt;8)- glycosidic linkages of terminal sialic acid residues in oligosaccharides, glycoproteins, glycolipids, colominic acid and synthetic substrates.</text>
        <dbReference type="EC" id="3.2.1.18"/>
    </reaction>
</comment>
<comment type="cofactor">
    <cofactor evidence="1">
        <name>Ca(2+)</name>
        <dbReference type="ChEBI" id="CHEBI:29108"/>
    </cofactor>
</comment>
<comment type="activity regulation">
    <text evidence="1">Inhibited by the neuraminidase inhibitors zanamivir (Relenza) and oseltamivir (Tamiflu). These drugs interfere with the release of progeny virus from infected cells and are effective against all influenza strains. Resistance to neuraminidase inhibitors is quite rare.</text>
</comment>
<comment type="subunit">
    <text evidence="1">Homotetramer.</text>
</comment>
<comment type="subcellular location">
    <subcellularLocation>
        <location evidence="1">Virion membrane</location>
    </subcellularLocation>
    <subcellularLocation>
        <location evidence="1">Host apical cell membrane</location>
        <topology evidence="1">Single-pass type II membrane protein</topology>
    </subcellularLocation>
    <text evidence="1">Preferentially accumulates at the apical plasma membrane in infected polarized epithelial cells, which is the virus assembly site. Uses lipid rafts for cell surface transport and apical sorting. In the virion, forms a mushroom-shaped spike on the surface of the membrane.</text>
</comment>
<comment type="domain">
    <text evidence="1">Intact N-terminus is essential for virion morphogenesis. Possesses two apical sorting signals, one in the ectodomain, which is likely to be a glycan, and the other in the transmembrane domain. The transmembrane domain also plays a role in lipid raft association.</text>
</comment>
<comment type="PTM">
    <text evidence="1">N-glycosylated.</text>
</comment>
<comment type="miscellaneous">
    <text>The influenza A genome consist of 8 RNA segments. Genetic variation of hemagglutinin and/or neuraminidase genes results in the emergence of new influenza strains. The mechanism of variation can be the result of point mutations or the result of genetic reassortment between segments of two different strains.</text>
</comment>
<comment type="similarity">
    <text evidence="1">Belongs to the glycosyl hydrolase 34 family.</text>
</comment>
<dbReference type="EC" id="3.2.1.18" evidence="1"/>
<dbReference type="EMBL" id="L06583">
    <property type="protein sequence ID" value="AAA43430.1"/>
    <property type="molecule type" value="Genomic_RNA"/>
</dbReference>
<dbReference type="SMR" id="Q07582"/>
<dbReference type="CAZy" id="GH34">
    <property type="family name" value="Glycoside Hydrolase Family 34"/>
</dbReference>
<dbReference type="GlyCosmos" id="Q07582">
    <property type="glycosylation" value="7 sites, No reported glycans"/>
</dbReference>
<dbReference type="GO" id="GO:0020002">
    <property type="term" value="C:host cell plasma membrane"/>
    <property type="evidence" value="ECO:0007669"/>
    <property type="project" value="UniProtKB-SubCell"/>
</dbReference>
<dbReference type="GO" id="GO:0016020">
    <property type="term" value="C:membrane"/>
    <property type="evidence" value="ECO:0007669"/>
    <property type="project" value="UniProtKB-UniRule"/>
</dbReference>
<dbReference type="GO" id="GO:0055036">
    <property type="term" value="C:virion membrane"/>
    <property type="evidence" value="ECO:0007669"/>
    <property type="project" value="UniProtKB-SubCell"/>
</dbReference>
<dbReference type="GO" id="GO:0004308">
    <property type="term" value="F:exo-alpha-sialidase activity"/>
    <property type="evidence" value="ECO:0007669"/>
    <property type="project" value="UniProtKB-UniRule"/>
</dbReference>
<dbReference type="GO" id="GO:0046872">
    <property type="term" value="F:metal ion binding"/>
    <property type="evidence" value="ECO:0007669"/>
    <property type="project" value="UniProtKB-UniRule"/>
</dbReference>
<dbReference type="GO" id="GO:0005975">
    <property type="term" value="P:carbohydrate metabolic process"/>
    <property type="evidence" value="ECO:0007669"/>
    <property type="project" value="InterPro"/>
</dbReference>
<dbReference type="GO" id="GO:0046761">
    <property type="term" value="P:viral budding from plasma membrane"/>
    <property type="evidence" value="ECO:0007669"/>
    <property type="project" value="UniProtKB-UniRule"/>
</dbReference>
<dbReference type="Gene3D" id="2.120.10.10">
    <property type="match status" value="1"/>
</dbReference>
<dbReference type="HAMAP" id="MF_04071">
    <property type="entry name" value="INFV_NRAM"/>
    <property type="match status" value="1"/>
</dbReference>
<dbReference type="InterPro" id="IPR001860">
    <property type="entry name" value="Glyco_hydro_34"/>
</dbReference>
<dbReference type="InterPro" id="IPR036278">
    <property type="entry name" value="Sialidase_sf"/>
</dbReference>
<dbReference type="Pfam" id="PF00064">
    <property type="entry name" value="Neur"/>
    <property type="match status" value="1"/>
</dbReference>
<dbReference type="SUPFAM" id="SSF50939">
    <property type="entry name" value="Sialidases"/>
    <property type="match status" value="1"/>
</dbReference>
<accession>Q07582</accession>
<gene>
    <name evidence="1" type="primary">NA</name>
</gene>